<dbReference type="EMBL" id="JAAUHK010000195">
    <property type="protein sequence ID" value="KAF4640330.1"/>
    <property type="molecule type" value="Genomic_DNA"/>
</dbReference>
<dbReference type="VEuPathDB" id="ToxoDB:TGME49_234380"/>
<dbReference type="Proteomes" id="UP000557509">
    <property type="component" value="Unassembled WGS sequence"/>
</dbReference>
<dbReference type="GO" id="GO:0031410">
    <property type="term" value="C:cytoplasmic vesicle"/>
    <property type="evidence" value="ECO:0007669"/>
    <property type="project" value="UniProtKB-KW"/>
</dbReference>
<dbReference type="GO" id="GO:0005576">
    <property type="term" value="C:extracellular region"/>
    <property type="evidence" value="ECO:0007669"/>
    <property type="project" value="UniProtKB-SubCell"/>
</dbReference>
<dbReference type="GO" id="GO:0020009">
    <property type="term" value="C:microneme"/>
    <property type="evidence" value="ECO:0007669"/>
    <property type="project" value="UniProtKB-SubCell"/>
</dbReference>
<accession>A0A7J6K0L7</accession>
<keyword id="KW-0968">Cytoplasmic vesicle</keyword>
<keyword id="KW-1185">Reference proteome</keyword>
<keyword id="KW-0964">Secreted</keyword>
<organism evidence="5">
    <name type="scientific">Toxoplasma gondii</name>
    <dbReference type="NCBI Taxonomy" id="5811"/>
    <lineage>
        <taxon>Eukaryota</taxon>
        <taxon>Sar</taxon>
        <taxon>Alveolata</taxon>
        <taxon>Apicomplexa</taxon>
        <taxon>Conoidasida</taxon>
        <taxon>Coccidia</taxon>
        <taxon>Eucoccidiorida</taxon>
        <taxon>Eimeriorina</taxon>
        <taxon>Sarcocystidae</taxon>
        <taxon>Toxoplasma</taxon>
    </lineage>
</organism>
<evidence type="ECO:0000269" key="1">
    <source>
    </source>
</evidence>
<evidence type="ECO:0000303" key="2">
    <source>
    </source>
</evidence>
<evidence type="ECO:0000305" key="3"/>
<evidence type="ECO:0000312" key="4">
    <source>
        <dbReference type="EMBL" id="KAF4640330.1"/>
    </source>
</evidence>
<evidence type="ECO:0000312" key="5">
    <source>
        <dbReference type="Proteomes" id="UP000557509"/>
    </source>
</evidence>
<gene>
    <name evidence="4" type="ORF">TGRH88_042550</name>
</gene>
<reference evidence="5" key="1">
    <citation type="submission" date="2020-03" db="EMBL/GenBank/DDBJ databases">
        <title>Genome sequence of Toxoplasma gondii RH-88 strain.</title>
        <authorList>
            <person name="Lorenzi H.A."/>
            <person name="Venepally P."/>
            <person name="Rozenberg A."/>
            <person name="Sibley D."/>
        </authorList>
    </citation>
    <scope>NUCLEOTIDE SEQUENCE [LARGE SCALE GENOMIC DNA]</scope>
    <source>
        <strain evidence="5">RH-88</strain>
    </source>
</reference>
<reference evidence="3" key="2">
    <citation type="journal article" date="2021" name="Life">
        <title>Ferlins and TgDOC2 in Toxoplasma Microneme, Rhoptry and Dense Granule Secretion.</title>
        <authorList>
            <person name="Tagoe D.N.A."/>
            <person name="Drozda A.A."/>
            <person name="Falco J.A."/>
            <person name="Bechtel T.J."/>
            <person name="Weerapana E."/>
            <person name="Gubbels M.J."/>
        </authorList>
    </citation>
    <scope>SUBCELLULAR LOCATION</scope>
    <scope>DEVELOPMENTAL STAGE</scope>
    <source>
        <strain evidence="2">RH</strain>
    </source>
</reference>
<proteinExistence type="evidence at transcript level"/>
<comment type="subcellular location">
    <subcellularLocation>
        <location evidence="1">Cytoplasmic vesicle</location>
        <location evidence="1">Secretory vesicle</location>
        <location evidence="1">Microneme</location>
    </subcellularLocation>
    <subcellularLocation>
        <location evidence="1">Secreted</location>
    </subcellularLocation>
</comment>
<comment type="developmental stage">
    <text evidence="1">Expressed in tachyzoites, bradyzoites and merozoites (PubMed:33803212). Not detected in sporozoites (PubMed:33803212). Not detected in sporulating oocysts (PubMed:33803212).</text>
</comment>
<name>MIC21_TOXGO</name>
<feature type="chain" id="PRO_0000461791" description="Microneme protein 21">
    <location>
        <begin position="1"/>
        <end position="347"/>
    </location>
</feature>
<protein>
    <recommendedName>
        <fullName evidence="2">Microneme protein 21</fullName>
        <shortName evidence="2">MIC21</shortName>
    </recommendedName>
</protein>
<sequence length="347" mass="38654">MLFPPGIFSEATAFSHKRSIRSISSHSTFDDVTAETDEAPVLAEVEKMPAVVKKVKHGMRKVLESLGILDSKCEQKKKHNKIPSAAAGDSPIKTFGYPFYDTSLGRSLLRPQVGLSFIEGFMQPIKVGAFDWMVQGTVDDVLSFLVCFDDYEAIAEKLGEDGAWHSEGNIGPLYLQLQNTSQYQGDASSILMAYSVEQILGRIDAWGVIDQTIGHWWKPAASLSEKAKSVYDTYQSLKERVPDLTTEKFQEVWNSASTKSGVGKLKELAKLFTLNPETRDLRDSWENLDRVDRGRKISLYVTSYPKRSRTMATFAFGENRVKLGDMAAAVAAATKDTTLDNLLKKYL</sequence>